<sequence length="303" mass="31773">MTENPVSDRLSTAAEKASVLIEALPWLQRFHGATVVVKYGGNAMIDDELKTAFAQDMVFLRLAGLHPVVVHGGGPQITAMLERLGMQGEFRGGLRVTTPETMDVVRMVLFGQVGRELVGLINQHGPHAVGMSGEDAGLFTARRRTATVDGEAVDVGLVGDVVSVNPDAVLDLIRAGRIPVVSTIAPDPDGVVHNVNADTAAGALAEALGAEKLVVLTDVEGLYTDWPDRSSLVTRLDADELEALLPGLASGMVPKMEACLRAVRGGVPRAHVIDGRLAHSVLLEVFTSAGVGTMVLPAGTGEK</sequence>
<protein>
    <recommendedName>
        <fullName evidence="1">Acetylglutamate kinase</fullName>
        <ecNumber evidence="1">2.7.2.8</ecNumber>
    </recommendedName>
    <alternativeName>
        <fullName evidence="1">N-acetyl-L-glutamate 5-phosphotransferase</fullName>
    </alternativeName>
    <alternativeName>
        <fullName evidence="1">NAG kinase</fullName>
        <shortName evidence="1">NAGK</shortName>
    </alternativeName>
</protein>
<reference key="1">
    <citation type="journal article" date="2007" name="Nat. Biotechnol.">
        <title>Complete genome sequence of the erythromycin-producing bacterium Saccharopolyspora erythraea NRRL23338.</title>
        <authorList>
            <person name="Oliynyk M."/>
            <person name="Samborskyy M."/>
            <person name="Lester J.B."/>
            <person name="Mironenko T."/>
            <person name="Scott N."/>
            <person name="Dickens S."/>
            <person name="Haydock S.F."/>
            <person name="Leadlay P.F."/>
        </authorList>
    </citation>
    <scope>NUCLEOTIDE SEQUENCE [LARGE SCALE GENOMIC DNA]</scope>
    <source>
        <strain>ATCC 11635 / DSM 40517 / JCM 4748 / NBRC 13426 / NCIMB 8594 / NRRL 2338</strain>
    </source>
</reference>
<keyword id="KW-0028">Amino-acid biosynthesis</keyword>
<keyword id="KW-0055">Arginine biosynthesis</keyword>
<keyword id="KW-0067">ATP-binding</keyword>
<keyword id="KW-0963">Cytoplasm</keyword>
<keyword id="KW-0418">Kinase</keyword>
<keyword id="KW-0547">Nucleotide-binding</keyword>
<keyword id="KW-1185">Reference proteome</keyword>
<keyword id="KW-0808">Transferase</keyword>
<accession>A4FKC5</accession>
<evidence type="ECO:0000255" key="1">
    <source>
        <dbReference type="HAMAP-Rule" id="MF_00082"/>
    </source>
</evidence>
<comment type="function">
    <text evidence="1">Catalyzes the ATP-dependent phosphorylation of N-acetyl-L-glutamate.</text>
</comment>
<comment type="catalytic activity">
    <reaction evidence="1">
        <text>N-acetyl-L-glutamate + ATP = N-acetyl-L-glutamyl 5-phosphate + ADP</text>
        <dbReference type="Rhea" id="RHEA:14629"/>
        <dbReference type="ChEBI" id="CHEBI:30616"/>
        <dbReference type="ChEBI" id="CHEBI:44337"/>
        <dbReference type="ChEBI" id="CHEBI:57936"/>
        <dbReference type="ChEBI" id="CHEBI:456216"/>
        <dbReference type="EC" id="2.7.2.8"/>
    </reaction>
</comment>
<comment type="pathway">
    <text evidence="1">Amino-acid biosynthesis; L-arginine biosynthesis; N(2)-acetyl-L-ornithine from L-glutamate: step 2/4.</text>
</comment>
<comment type="subcellular location">
    <subcellularLocation>
        <location evidence="1">Cytoplasm</location>
    </subcellularLocation>
</comment>
<comment type="similarity">
    <text evidence="1">Belongs to the acetylglutamate kinase family. ArgB subfamily.</text>
</comment>
<feature type="chain" id="PRO_1000010539" description="Acetylglutamate kinase">
    <location>
        <begin position="1"/>
        <end position="303"/>
    </location>
</feature>
<feature type="binding site" evidence="1">
    <location>
        <begin position="73"/>
        <end position="74"/>
    </location>
    <ligand>
        <name>substrate</name>
    </ligand>
</feature>
<feature type="binding site" evidence="1">
    <location>
        <position position="95"/>
    </location>
    <ligand>
        <name>substrate</name>
    </ligand>
</feature>
<feature type="binding site" evidence="1">
    <location>
        <position position="194"/>
    </location>
    <ligand>
        <name>substrate</name>
    </ligand>
</feature>
<feature type="site" description="Transition state stabilizer" evidence="1">
    <location>
        <position position="38"/>
    </location>
</feature>
<feature type="site" description="Transition state stabilizer" evidence="1">
    <location>
        <position position="255"/>
    </location>
</feature>
<organism>
    <name type="scientific">Saccharopolyspora erythraea (strain ATCC 11635 / DSM 40517 / JCM 4748 / NBRC 13426 / NCIMB 8594 / NRRL 2338)</name>
    <dbReference type="NCBI Taxonomy" id="405948"/>
    <lineage>
        <taxon>Bacteria</taxon>
        <taxon>Bacillati</taxon>
        <taxon>Actinomycetota</taxon>
        <taxon>Actinomycetes</taxon>
        <taxon>Pseudonocardiales</taxon>
        <taxon>Pseudonocardiaceae</taxon>
        <taxon>Saccharopolyspora</taxon>
    </lineage>
</organism>
<gene>
    <name evidence="1" type="primary">argB</name>
    <name type="ordered locus">SACE_5260</name>
</gene>
<proteinExistence type="inferred from homology"/>
<dbReference type="EC" id="2.7.2.8" evidence="1"/>
<dbReference type="EMBL" id="AM420293">
    <property type="protein sequence ID" value="CAM04500.1"/>
    <property type="molecule type" value="Genomic_DNA"/>
</dbReference>
<dbReference type="RefSeq" id="WP_009951373.1">
    <property type="nucleotide sequence ID" value="NC_009142.1"/>
</dbReference>
<dbReference type="SMR" id="A4FKC5"/>
<dbReference type="STRING" id="405948.SACE_5260"/>
<dbReference type="KEGG" id="sen:SACE_5260"/>
<dbReference type="eggNOG" id="COG0548">
    <property type="taxonomic scope" value="Bacteria"/>
</dbReference>
<dbReference type="HOGENOM" id="CLU_053680_0_1_11"/>
<dbReference type="OrthoDB" id="9803155at2"/>
<dbReference type="UniPathway" id="UPA00068">
    <property type="reaction ID" value="UER00107"/>
</dbReference>
<dbReference type="Proteomes" id="UP000006728">
    <property type="component" value="Chromosome"/>
</dbReference>
<dbReference type="GO" id="GO:0005737">
    <property type="term" value="C:cytoplasm"/>
    <property type="evidence" value="ECO:0007669"/>
    <property type="project" value="UniProtKB-SubCell"/>
</dbReference>
<dbReference type="GO" id="GO:0003991">
    <property type="term" value="F:acetylglutamate kinase activity"/>
    <property type="evidence" value="ECO:0007669"/>
    <property type="project" value="UniProtKB-UniRule"/>
</dbReference>
<dbReference type="GO" id="GO:0005524">
    <property type="term" value="F:ATP binding"/>
    <property type="evidence" value="ECO:0007669"/>
    <property type="project" value="UniProtKB-UniRule"/>
</dbReference>
<dbReference type="GO" id="GO:0042450">
    <property type="term" value="P:arginine biosynthetic process via ornithine"/>
    <property type="evidence" value="ECO:0007669"/>
    <property type="project" value="UniProtKB-UniRule"/>
</dbReference>
<dbReference type="GO" id="GO:0006526">
    <property type="term" value="P:L-arginine biosynthetic process"/>
    <property type="evidence" value="ECO:0007669"/>
    <property type="project" value="UniProtKB-UniPathway"/>
</dbReference>
<dbReference type="CDD" id="cd04250">
    <property type="entry name" value="AAK_NAGK-C"/>
    <property type="match status" value="1"/>
</dbReference>
<dbReference type="FunFam" id="3.40.1160.10:FF:000004">
    <property type="entry name" value="Acetylglutamate kinase"/>
    <property type="match status" value="1"/>
</dbReference>
<dbReference type="Gene3D" id="3.40.1160.10">
    <property type="entry name" value="Acetylglutamate kinase-like"/>
    <property type="match status" value="1"/>
</dbReference>
<dbReference type="HAMAP" id="MF_00082">
    <property type="entry name" value="ArgB"/>
    <property type="match status" value="1"/>
</dbReference>
<dbReference type="InterPro" id="IPR036393">
    <property type="entry name" value="AceGlu_kinase-like_sf"/>
</dbReference>
<dbReference type="InterPro" id="IPR004662">
    <property type="entry name" value="AcgluKinase_fam"/>
</dbReference>
<dbReference type="InterPro" id="IPR037528">
    <property type="entry name" value="ArgB"/>
</dbReference>
<dbReference type="InterPro" id="IPR001048">
    <property type="entry name" value="Asp/Glu/Uridylate_kinase"/>
</dbReference>
<dbReference type="InterPro" id="IPR001057">
    <property type="entry name" value="Glu/AcGlu_kinase"/>
</dbReference>
<dbReference type="InterPro" id="IPR041727">
    <property type="entry name" value="NAGK-C"/>
</dbReference>
<dbReference type="NCBIfam" id="TIGR00761">
    <property type="entry name" value="argB"/>
    <property type="match status" value="1"/>
</dbReference>
<dbReference type="PANTHER" id="PTHR23342">
    <property type="entry name" value="N-ACETYLGLUTAMATE SYNTHASE"/>
    <property type="match status" value="1"/>
</dbReference>
<dbReference type="PANTHER" id="PTHR23342:SF0">
    <property type="entry name" value="N-ACETYLGLUTAMATE SYNTHASE, MITOCHONDRIAL"/>
    <property type="match status" value="1"/>
</dbReference>
<dbReference type="Pfam" id="PF00696">
    <property type="entry name" value="AA_kinase"/>
    <property type="match status" value="1"/>
</dbReference>
<dbReference type="PIRSF" id="PIRSF000728">
    <property type="entry name" value="NAGK"/>
    <property type="match status" value="1"/>
</dbReference>
<dbReference type="PRINTS" id="PR00474">
    <property type="entry name" value="GLU5KINASE"/>
</dbReference>
<dbReference type="SUPFAM" id="SSF53633">
    <property type="entry name" value="Carbamate kinase-like"/>
    <property type="match status" value="1"/>
</dbReference>
<name>ARGB_SACEN</name>